<accession>Q8DMD9</accession>
<dbReference type="EC" id="2.4.2.17" evidence="1"/>
<dbReference type="EMBL" id="BA000039">
    <property type="protein sequence ID" value="BAC07733.1"/>
    <property type="molecule type" value="Genomic_DNA"/>
</dbReference>
<dbReference type="RefSeq" id="NP_680971.1">
    <property type="nucleotide sequence ID" value="NC_004113.1"/>
</dbReference>
<dbReference type="RefSeq" id="WP_011056035.1">
    <property type="nucleotide sequence ID" value="NC_004113.1"/>
</dbReference>
<dbReference type="SMR" id="Q8DMD9"/>
<dbReference type="STRING" id="197221.gene:10746761"/>
<dbReference type="EnsemblBacteria" id="BAC07733">
    <property type="protein sequence ID" value="BAC07733"/>
    <property type="gene ID" value="BAC07733"/>
</dbReference>
<dbReference type="KEGG" id="tel:tll0180"/>
<dbReference type="PATRIC" id="fig|197221.4.peg.186"/>
<dbReference type="eggNOG" id="COG0040">
    <property type="taxonomic scope" value="Bacteria"/>
</dbReference>
<dbReference type="UniPathway" id="UPA00031">
    <property type="reaction ID" value="UER00006"/>
</dbReference>
<dbReference type="Proteomes" id="UP000000440">
    <property type="component" value="Chromosome"/>
</dbReference>
<dbReference type="GO" id="GO:0005737">
    <property type="term" value="C:cytoplasm"/>
    <property type="evidence" value="ECO:0007669"/>
    <property type="project" value="UniProtKB-SubCell"/>
</dbReference>
<dbReference type="GO" id="GO:0005524">
    <property type="term" value="F:ATP binding"/>
    <property type="evidence" value="ECO:0007669"/>
    <property type="project" value="UniProtKB-KW"/>
</dbReference>
<dbReference type="GO" id="GO:0003879">
    <property type="term" value="F:ATP phosphoribosyltransferase activity"/>
    <property type="evidence" value="ECO:0007669"/>
    <property type="project" value="UniProtKB-UniRule"/>
</dbReference>
<dbReference type="GO" id="GO:0000105">
    <property type="term" value="P:L-histidine biosynthetic process"/>
    <property type="evidence" value="ECO:0007669"/>
    <property type="project" value="UniProtKB-UniRule"/>
</dbReference>
<dbReference type="CDD" id="cd13595">
    <property type="entry name" value="PBP2_HisGs"/>
    <property type="match status" value="1"/>
</dbReference>
<dbReference type="FunFam" id="3.40.190.10:FF:000008">
    <property type="entry name" value="ATP phosphoribosyltransferase"/>
    <property type="match status" value="1"/>
</dbReference>
<dbReference type="Gene3D" id="3.40.190.10">
    <property type="entry name" value="Periplasmic binding protein-like II"/>
    <property type="match status" value="2"/>
</dbReference>
<dbReference type="HAMAP" id="MF_01018">
    <property type="entry name" value="HisG_Short"/>
    <property type="match status" value="1"/>
</dbReference>
<dbReference type="InterPro" id="IPR013820">
    <property type="entry name" value="ATP_PRibTrfase_cat"/>
</dbReference>
<dbReference type="InterPro" id="IPR018198">
    <property type="entry name" value="ATP_PRibTrfase_CS"/>
</dbReference>
<dbReference type="InterPro" id="IPR001348">
    <property type="entry name" value="ATP_PRibTrfase_HisG"/>
</dbReference>
<dbReference type="InterPro" id="IPR024893">
    <property type="entry name" value="ATP_PRibTrfase_HisG_short"/>
</dbReference>
<dbReference type="NCBIfam" id="TIGR00070">
    <property type="entry name" value="hisG"/>
    <property type="match status" value="1"/>
</dbReference>
<dbReference type="PANTHER" id="PTHR21403:SF8">
    <property type="entry name" value="ATP PHOSPHORIBOSYLTRANSFERASE"/>
    <property type="match status" value="1"/>
</dbReference>
<dbReference type="PANTHER" id="PTHR21403">
    <property type="entry name" value="ATP PHOSPHORIBOSYLTRANSFERASE ATP-PRTASE"/>
    <property type="match status" value="1"/>
</dbReference>
<dbReference type="Pfam" id="PF01634">
    <property type="entry name" value="HisG"/>
    <property type="match status" value="1"/>
</dbReference>
<dbReference type="SUPFAM" id="SSF53850">
    <property type="entry name" value="Periplasmic binding protein-like II"/>
    <property type="match status" value="1"/>
</dbReference>
<dbReference type="PROSITE" id="PS01316">
    <property type="entry name" value="ATP_P_PHORIBOSYLTR"/>
    <property type="match status" value="1"/>
</dbReference>
<reference key="1">
    <citation type="journal article" date="2002" name="DNA Res.">
        <title>Complete genome structure of the thermophilic cyanobacterium Thermosynechococcus elongatus BP-1.</title>
        <authorList>
            <person name="Nakamura Y."/>
            <person name="Kaneko T."/>
            <person name="Sato S."/>
            <person name="Ikeuchi M."/>
            <person name="Katoh H."/>
            <person name="Sasamoto S."/>
            <person name="Watanabe A."/>
            <person name="Iriguchi M."/>
            <person name="Kawashima K."/>
            <person name="Kimura T."/>
            <person name="Kishida Y."/>
            <person name="Kiyokawa C."/>
            <person name="Kohara M."/>
            <person name="Matsumoto M."/>
            <person name="Matsuno A."/>
            <person name="Nakazaki N."/>
            <person name="Shimpo S."/>
            <person name="Sugimoto M."/>
            <person name="Takeuchi C."/>
            <person name="Yamada M."/>
            <person name="Tabata S."/>
        </authorList>
    </citation>
    <scope>NUCLEOTIDE SEQUENCE [LARGE SCALE GENOMIC DNA]</scope>
    <source>
        <strain>NIES-2133 / IAM M-273 / BP-1</strain>
    </source>
</reference>
<sequence>MLTIALPKGALLKDSVAYFQRLGLNFEALLEPANRQLQVLSQDGRARALLVRAQDVPVYVQYGQAQLGIVGYDVLREKNPHVAKLADLGFGQCRLSVAVKASSPYRSARDLPPHCRVASKFVRCADAFFQQLDLPVDIVPLYGSVELGPITGMAEAIVDLVSTGRTLKENGLVEIEQIFSSTAYLIAHPRSYRLNLNGLGHYVPQLTGAIA</sequence>
<evidence type="ECO:0000255" key="1">
    <source>
        <dbReference type="HAMAP-Rule" id="MF_01018"/>
    </source>
</evidence>
<feature type="chain" id="PRO_0000151941" description="ATP phosphoribosyltransferase">
    <location>
        <begin position="1"/>
        <end position="211"/>
    </location>
</feature>
<gene>
    <name evidence="1" type="primary">hisG</name>
    <name type="ordered locus">tll0180</name>
</gene>
<keyword id="KW-0028">Amino-acid biosynthesis</keyword>
<keyword id="KW-0067">ATP-binding</keyword>
<keyword id="KW-0963">Cytoplasm</keyword>
<keyword id="KW-0328">Glycosyltransferase</keyword>
<keyword id="KW-0368">Histidine biosynthesis</keyword>
<keyword id="KW-0547">Nucleotide-binding</keyword>
<keyword id="KW-1185">Reference proteome</keyword>
<keyword id="KW-0808">Transferase</keyword>
<protein>
    <recommendedName>
        <fullName evidence="1">ATP phosphoribosyltransferase</fullName>
        <shortName evidence="1">ATP-PRT</shortName>
        <shortName evidence="1">ATP-PRTase</shortName>
        <ecNumber evidence="1">2.4.2.17</ecNumber>
    </recommendedName>
</protein>
<name>HIS1_THEVB</name>
<proteinExistence type="inferred from homology"/>
<organism>
    <name type="scientific">Thermosynechococcus vestitus (strain NIES-2133 / IAM M-273 / BP-1)</name>
    <dbReference type="NCBI Taxonomy" id="197221"/>
    <lineage>
        <taxon>Bacteria</taxon>
        <taxon>Bacillati</taxon>
        <taxon>Cyanobacteriota</taxon>
        <taxon>Cyanophyceae</taxon>
        <taxon>Acaryochloridales</taxon>
        <taxon>Thermosynechococcaceae</taxon>
        <taxon>Thermosynechococcus</taxon>
    </lineage>
</organism>
<comment type="function">
    <text evidence="1">Catalyzes the condensation of ATP and 5-phosphoribose 1-diphosphate to form N'-(5'-phosphoribosyl)-ATP (PR-ATP). Has a crucial role in the pathway because the rate of histidine biosynthesis seems to be controlled primarily by regulation of HisG enzymatic activity.</text>
</comment>
<comment type="catalytic activity">
    <reaction evidence="1">
        <text>1-(5-phospho-beta-D-ribosyl)-ATP + diphosphate = 5-phospho-alpha-D-ribose 1-diphosphate + ATP</text>
        <dbReference type="Rhea" id="RHEA:18473"/>
        <dbReference type="ChEBI" id="CHEBI:30616"/>
        <dbReference type="ChEBI" id="CHEBI:33019"/>
        <dbReference type="ChEBI" id="CHEBI:58017"/>
        <dbReference type="ChEBI" id="CHEBI:73183"/>
        <dbReference type="EC" id="2.4.2.17"/>
    </reaction>
</comment>
<comment type="pathway">
    <text evidence="1">Amino-acid biosynthesis; L-histidine biosynthesis; L-histidine from 5-phospho-alpha-D-ribose 1-diphosphate: step 1/9.</text>
</comment>
<comment type="subunit">
    <text evidence="1">Heteromultimer composed of HisG and HisZ subunits.</text>
</comment>
<comment type="subcellular location">
    <subcellularLocation>
        <location evidence="1">Cytoplasm</location>
    </subcellularLocation>
</comment>
<comment type="domain">
    <text>Lacks the C-terminal regulatory region which is replaced by HisZ.</text>
</comment>
<comment type="similarity">
    <text evidence="1">Belongs to the ATP phosphoribosyltransferase family. Short subfamily.</text>
</comment>